<proteinExistence type="inferred from homology"/>
<sequence>MGNNVVVLGTQWGDEGKGKIVDLLTERAKYVVRYQGGHNAGHTLVINGEKTVLHLIPSGILRENVTSIIGNGVVLSPAALMKEMKELEDRGIPVRERLLLSEACPLILDYHVALDNAREKARGAKAIGTTGRGIGPAYEDKVARRGLRVGDLFDKETFAEKLKEVMEYHNFQLVNYYKAEAVDYQKVLDDTMAVADILTSMVVDVSDLLDQARQRGDFVMFEGAQGTLLDIDHGTYPYVTSSNTTAGGVATGSGLGPRYVDYVLGILKAYSTRVGAGPFPTELFDETGEFLCKQGNEFGATTGRRRRTGWLDTVAVRRAVQLNSLSGFCLTKLDVLDGLKEVKLCVAYRMPDGREVTTTPLAADDWKGVEPIYETMPGWSESTFGVKDRSGLPQAALNYIKRIEELTGVPIDIISTGPDRTETMILRDPFDA</sequence>
<organism>
    <name type="scientific">Escherichia coli O9:H4 (strain HS)</name>
    <dbReference type="NCBI Taxonomy" id="331112"/>
    <lineage>
        <taxon>Bacteria</taxon>
        <taxon>Pseudomonadati</taxon>
        <taxon>Pseudomonadota</taxon>
        <taxon>Gammaproteobacteria</taxon>
        <taxon>Enterobacterales</taxon>
        <taxon>Enterobacteriaceae</taxon>
        <taxon>Escherichia</taxon>
    </lineage>
</organism>
<name>PURA_ECOHS</name>
<reference key="1">
    <citation type="journal article" date="2008" name="J. Bacteriol.">
        <title>The pangenome structure of Escherichia coli: comparative genomic analysis of E. coli commensal and pathogenic isolates.</title>
        <authorList>
            <person name="Rasko D.A."/>
            <person name="Rosovitz M.J."/>
            <person name="Myers G.S.A."/>
            <person name="Mongodin E.F."/>
            <person name="Fricke W.F."/>
            <person name="Gajer P."/>
            <person name="Crabtree J."/>
            <person name="Sebaihia M."/>
            <person name="Thomson N.R."/>
            <person name="Chaudhuri R."/>
            <person name="Henderson I.R."/>
            <person name="Sperandio V."/>
            <person name="Ravel J."/>
        </authorList>
    </citation>
    <scope>NUCLEOTIDE SEQUENCE [LARGE SCALE GENOMIC DNA]</scope>
    <source>
        <strain>HS</strain>
    </source>
</reference>
<gene>
    <name evidence="1" type="primary">purA</name>
    <name type="ordered locus">EcHS_A4420</name>
</gene>
<protein>
    <recommendedName>
        <fullName evidence="1">Adenylosuccinate synthetase</fullName>
        <shortName evidence="1">AMPSase</shortName>
        <shortName evidence="1">AdSS</shortName>
        <ecNumber evidence="1">6.3.4.4</ecNumber>
    </recommendedName>
    <alternativeName>
        <fullName evidence="1">IMP--aspartate ligase</fullName>
    </alternativeName>
</protein>
<dbReference type="EC" id="6.3.4.4" evidence="1"/>
<dbReference type="EMBL" id="CP000802">
    <property type="protein sequence ID" value="ABV08576.1"/>
    <property type="molecule type" value="Genomic_DNA"/>
</dbReference>
<dbReference type="RefSeq" id="WP_000527955.1">
    <property type="nucleotide sequence ID" value="NC_009800.1"/>
</dbReference>
<dbReference type="SMR" id="A8A7S2"/>
<dbReference type="GeneID" id="75202411"/>
<dbReference type="KEGG" id="ecx:EcHS_A4420"/>
<dbReference type="HOGENOM" id="CLU_029848_0_0_6"/>
<dbReference type="UniPathway" id="UPA00075">
    <property type="reaction ID" value="UER00335"/>
</dbReference>
<dbReference type="GO" id="GO:0005737">
    <property type="term" value="C:cytoplasm"/>
    <property type="evidence" value="ECO:0007669"/>
    <property type="project" value="UniProtKB-SubCell"/>
</dbReference>
<dbReference type="GO" id="GO:0004019">
    <property type="term" value="F:adenylosuccinate synthase activity"/>
    <property type="evidence" value="ECO:0007669"/>
    <property type="project" value="UniProtKB-UniRule"/>
</dbReference>
<dbReference type="GO" id="GO:0005525">
    <property type="term" value="F:GTP binding"/>
    <property type="evidence" value="ECO:0007669"/>
    <property type="project" value="UniProtKB-UniRule"/>
</dbReference>
<dbReference type="GO" id="GO:0000287">
    <property type="term" value="F:magnesium ion binding"/>
    <property type="evidence" value="ECO:0007669"/>
    <property type="project" value="UniProtKB-UniRule"/>
</dbReference>
<dbReference type="GO" id="GO:0044208">
    <property type="term" value="P:'de novo' AMP biosynthetic process"/>
    <property type="evidence" value="ECO:0007669"/>
    <property type="project" value="UniProtKB-UniRule"/>
</dbReference>
<dbReference type="GO" id="GO:0046040">
    <property type="term" value="P:IMP metabolic process"/>
    <property type="evidence" value="ECO:0007669"/>
    <property type="project" value="TreeGrafter"/>
</dbReference>
<dbReference type="CDD" id="cd03108">
    <property type="entry name" value="AdSS"/>
    <property type="match status" value="1"/>
</dbReference>
<dbReference type="FunFam" id="1.10.300.10:FF:000001">
    <property type="entry name" value="Adenylosuccinate synthetase"/>
    <property type="match status" value="1"/>
</dbReference>
<dbReference type="FunFam" id="3.90.170.10:FF:000001">
    <property type="entry name" value="Adenylosuccinate synthetase"/>
    <property type="match status" value="1"/>
</dbReference>
<dbReference type="Gene3D" id="3.40.440.10">
    <property type="entry name" value="Adenylosuccinate Synthetase, subunit A, domain 1"/>
    <property type="match status" value="1"/>
</dbReference>
<dbReference type="Gene3D" id="1.10.300.10">
    <property type="entry name" value="Adenylosuccinate Synthetase, subunit A, domain 2"/>
    <property type="match status" value="1"/>
</dbReference>
<dbReference type="Gene3D" id="3.90.170.10">
    <property type="entry name" value="Adenylosuccinate Synthetase, subunit A, domain 3"/>
    <property type="match status" value="1"/>
</dbReference>
<dbReference type="HAMAP" id="MF_00011">
    <property type="entry name" value="Adenylosucc_synth"/>
    <property type="match status" value="1"/>
</dbReference>
<dbReference type="InterPro" id="IPR018220">
    <property type="entry name" value="Adenylosuccin_syn_GTP-bd"/>
</dbReference>
<dbReference type="InterPro" id="IPR033128">
    <property type="entry name" value="Adenylosuccin_syn_Lys_AS"/>
</dbReference>
<dbReference type="InterPro" id="IPR042109">
    <property type="entry name" value="Adenylosuccinate_synth_dom1"/>
</dbReference>
<dbReference type="InterPro" id="IPR042110">
    <property type="entry name" value="Adenylosuccinate_synth_dom2"/>
</dbReference>
<dbReference type="InterPro" id="IPR042111">
    <property type="entry name" value="Adenylosuccinate_synth_dom3"/>
</dbReference>
<dbReference type="InterPro" id="IPR001114">
    <property type="entry name" value="Adenylosuccinate_synthetase"/>
</dbReference>
<dbReference type="InterPro" id="IPR027417">
    <property type="entry name" value="P-loop_NTPase"/>
</dbReference>
<dbReference type="NCBIfam" id="NF002223">
    <property type="entry name" value="PRK01117.1"/>
    <property type="match status" value="1"/>
</dbReference>
<dbReference type="NCBIfam" id="TIGR00184">
    <property type="entry name" value="purA"/>
    <property type="match status" value="1"/>
</dbReference>
<dbReference type="PANTHER" id="PTHR11846">
    <property type="entry name" value="ADENYLOSUCCINATE SYNTHETASE"/>
    <property type="match status" value="1"/>
</dbReference>
<dbReference type="PANTHER" id="PTHR11846:SF0">
    <property type="entry name" value="ADENYLOSUCCINATE SYNTHETASE"/>
    <property type="match status" value="1"/>
</dbReference>
<dbReference type="Pfam" id="PF00709">
    <property type="entry name" value="Adenylsucc_synt"/>
    <property type="match status" value="1"/>
</dbReference>
<dbReference type="SMART" id="SM00788">
    <property type="entry name" value="Adenylsucc_synt"/>
    <property type="match status" value="1"/>
</dbReference>
<dbReference type="SUPFAM" id="SSF52540">
    <property type="entry name" value="P-loop containing nucleoside triphosphate hydrolases"/>
    <property type="match status" value="1"/>
</dbReference>
<dbReference type="PROSITE" id="PS01266">
    <property type="entry name" value="ADENYLOSUCCIN_SYN_1"/>
    <property type="match status" value="1"/>
</dbReference>
<dbReference type="PROSITE" id="PS00513">
    <property type="entry name" value="ADENYLOSUCCIN_SYN_2"/>
    <property type="match status" value="1"/>
</dbReference>
<feature type="chain" id="PRO_1000057088" description="Adenylosuccinate synthetase">
    <location>
        <begin position="1"/>
        <end position="432"/>
    </location>
</feature>
<feature type="active site" description="Proton acceptor" evidence="1">
    <location>
        <position position="14"/>
    </location>
</feature>
<feature type="active site" description="Proton donor" evidence="1">
    <location>
        <position position="42"/>
    </location>
</feature>
<feature type="binding site" evidence="1">
    <location>
        <begin position="13"/>
        <end position="19"/>
    </location>
    <ligand>
        <name>GTP</name>
        <dbReference type="ChEBI" id="CHEBI:37565"/>
    </ligand>
</feature>
<feature type="binding site" description="in other chain" evidence="1">
    <location>
        <begin position="14"/>
        <end position="17"/>
    </location>
    <ligand>
        <name>IMP</name>
        <dbReference type="ChEBI" id="CHEBI:58053"/>
        <note>ligand shared between dimeric partners</note>
    </ligand>
</feature>
<feature type="binding site" evidence="1">
    <location>
        <position position="14"/>
    </location>
    <ligand>
        <name>Mg(2+)</name>
        <dbReference type="ChEBI" id="CHEBI:18420"/>
    </ligand>
</feature>
<feature type="binding site" description="in other chain" evidence="1">
    <location>
        <begin position="39"/>
        <end position="42"/>
    </location>
    <ligand>
        <name>IMP</name>
        <dbReference type="ChEBI" id="CHEBI:58053"/>
        <note>ligand shared between dimeric partners</note>
    </ligand>
</feature>
<feature type="binding site" evidence="1">
    <location>
        <begin position="41"/>
        <end position="43"/>
    </location>
    <ligand>
        <name>GTP</name>
        <dbReference type="ChEBI" id="CHEBI:37565"/>
    </ligand>
</feature>
<feature type="binding site" evidence="1">
    <location>
        <position position="41"/>
    </location>
    <ligand>
        <name>Mg(2+)</name>
        <dbReference type="ChEBI" id="CHEBI:18420"/>
    </ligand>
</feature>
<feature type="binding site" description="in other chain" evidence="1">
    <location>
        <position position="130"/>
    </location>
    <ligand>
        <name>IMP</name>
        <dbReference type="ChEBI" id="CHEBI:58053"/>
        <note>ligand shared between dimeric partners</note>
    </ligand>
</feature>
<feature type="binding site" evidence="1">
    <location>
        <position position="144"/>
    </location>
    <ligand>
        <name>IMP</name>
        <dbReference type="ChEBI" id="CHEBI:58053"/>
        <note>ligand shared between dimeric partners</note>
    </ligand>
</feature>
<feature type="binding site" description="in other chain" evidence="1">
    <location>
        <position position="225"/>
    </location>
    <ligand>
        <name>IMP</name>
        <dbReference type="ChEBI" id="CHEBI:58053"/>
        <note>ligand shared between dimeric partners</note>
    </ligand>
</feature>
<feature type="binding site" description="in other chain" evidence="1">
    <location>
        <position position="240"/>
    </location>
    <ligand>
        <name>IMP</name>
        <dbReference type="ChEBI" id="CHEBI:58053"/>
        <note>ligand shared between dimeric partners</note>
    </ligand>
</feature>
<feature type="binding site" evidence="1">
    <location>
        <begin position="300"/>
        <end position="306"/>
    </location>
    <ligand>
        <name>substrate</name>
    </ligand>
</feature>
<feature type="binding site" description="in other chain" evidence="1">
    <location>
        <position position="304"/>
    </location>
    <ligand>
        <name>IMP</name>
        <dbReference type="ChEBI" id="CHEBI:58053"/>
        <note>ligand shared between dimeric partners</note>
    </ligand>
</feature>
<feature type="binding site" evidence="1">
    <location>
        <position position="306"/>
    </location>
    <ligand>
        <name>GTP</name>
        <dbReference type="ChEBI" id="CHEBI:37565"/>
    </ligand>
</feature>
<feature type="binding site" evidence="1">
    <location>
        <begin position="332"/>
        <end position="334"/>
    </location>
    <ligand>
        <name>GTP</name>
        <dbReference type="ChEBI" id="CHEBI:37565"/>
    </ligand>
</feature>
<feature type="binding site" evidence="1">
    <location>
        <begin position="415"/>
        <end position="417"/>
    </location>
    <ligand>
        <name>GTP</name>
        <dbReference type="ChEBI" id="CHEBI:37565"/>
    </ligand>
</feature>
<keyword id="KW-0963">Cytoplasm</keyword>
<keyword id="KW-0342">GTP-binding</keyword>
<keyword id="KW-0436">Ligase</keyword>
<keyword id="KW-0460">Magnesium</keyword>
<keyword id="KW-0479">Metal-binding</keyword>
<keyword id="KW-0547">Nucleotide-binding</keyword>
<keyword id="KW-0658">Purine biosynthesis</keyword>
<accession>A8A7S2</accession>
<evidence type="ECO:0000255" key="1">
    <source>
        <dbReference type="HAMAP-Rule" id="MF_00011"/>
    </source>
</evidence>
<comment type="function">
    <text evidence="1">Plays an important role in the de novo pathway of purine nucleotide biosynthesis. Catalyzes the first committed step in the biosynthesis of AMP from IMP.</text>
</comment>
<comment type="catalytic activity">
    <reaction evidence="1">
        <text>IMP + L-aspartate + GTP = N(6)-(1,2-dicarboxyethyl)-AMP + GDP + phosphate + 2 H(+)</text>
        <dbReference type="Rhea" id="RHEA:15753"/>
        <dbReference type="ChEBI" id="CHEBI:15378"/>
        <dbReference type="ChEBI" id="CHEBI:29991"/>
        <dbReference type="ChEBI" id="CHEBI:37565"/>
        <dbReference type="ChEBI" id="CHEBI:43474"/>
        <dbReference type="ChEBI" id="CHEBI:57567"/>
        <dbReference type="ChEBI" id="CHEBI:58053"/>
        <dbReference type="ChEBI" id="CHEBI:58189"/>
        <dbReference type="EC" id="6.3.4.4"/>
    </reaction>
</comment>
<comment type="cofactor">
    <cofactor evidence="1">
        <name>Mg(2+)</name>
        <dbReference type="ChEBI" id="CHEBI:18420"/>
    </cofactor>
    <text evidence="1">Binds 1 Mg(2+) ion per subunit.</text>
</comment>
<comment type="pathway">
    <text evidence="1">Purine metabolism; AMP biosynthesis via de novo pathway; AMP from IMP: step 1/2.</text>
</comment>
<comment type="subunit">
    <text evidence="1">Homodimer.</text>
</comment>
<comment type="subcellular location">
    <subcellularLocation>
        <location evidence="1">Cytoplasm</location>
    </subcellularLocation>
</comment>
<comment type="similarity">
    <text evidence="1">Belongs to the adenylosuccinate synthetase family.</text>
</comment>